<reference key="1">
    <citation type="journal article" date="1996" name="Mol. Phylogenet. Evol.">
        <title>Phylogenetic inferences from chloroplast chlB gene sequences of Nephrolepis exaltata (Filicopsida), Ephedra altissima (Gnetopsida), and diverse land plants.</title>
        <authorList>
            <person name="Boivin R."/>
            <person name="Richard M."/>
            <person name="Beauseigle D."/>
            <person name="Bousquet J."/>
            <person name="Bellemare G."/>
        </authorList>
    </citation>
    <scope>NUCLEOTIDE SEQUENCE [GENOMIC DNA]</scope>
</reference>
<organism>
    <name type="scientific">Nephrolepis exaltata</name>
    <name type="common">Boston sword fern</name>
    <name type="synonym">Polypodium exaltatum</name>
    <dbReference type="NCBI Taxonomy" id="34165"/>
    <lineage>
        <taxon>Eukaryota</taxon>
        <taxon>Viridiplantae</taxon>
        <taxon>Streptophyta</taxon>
        <taxon>Embryophyta</taxon>
        <taxon>Tracheophyta</taxon>
        <taxon>Polypodiopsida</taxon>
        <taxon>Polypodiidae</taxon>
        <taxon>Polypodiales</taxon>
        <taxon>Polypodiineae</taxon>
        <taxon>Nephrolepidaceae</taxon>
        <taxon>Nephrolepis</taxon>
    </lineage>
</organism>
<accession>P37850</accession>
<feature type="chain" id="PRO_0000219832" description="Light-independent protochlorophyllide reductase subunit B">
    <location>
        <begin position="1" status="less than"/>
        <end position="103" status="greater than"/>
    </location>
</feature>
<feature type="non-terminal residue">
    <location>
        <position position="1"/>
    </location>
</feature>
<feature type="non-terminal residue">
    <location>
        <position position="103"/>
    </location>
</feature>
<comment type="function">
    <text evidence="1">Component of the dark-operative protochlorophyllide reductase (DPOR) that uses Mg-ATP and reduced ferredoxin to reduce ring D of protochlorophyllide (Pchlide) to form chlorophyllide a (Chlide). This reaction is light-independent. The NB-protein (ChlN-ChlB) is the catalytic component of the complex (By similarity).</text>
</comment>
<comment type="catalytic activity">
    <reaction>
        <text>chlorophyllide a + oxidized 2[4Fe-4S]-[ferredoxin] + 2 ADP + 2 phosphate = protochlorophyllide a + reduced 2[4Fe-4S]-[ferredoxin] + 2 ATP + 2 H2O</text>
        <dbReference type="Rhea" id="RHEA:28202"/>
        <dbReference type="Rhea" id="RHEA-COMP:10002"/>
        <dbReference type="Rhea" id="RHEA-COMP:10004"/>
        <dbReference type="ChEBI" id="CHEBI:15377"/>
        <dbReference type="ChEBI" id="CHEBI:30616"/>
        <dbReference type="ChEBI" id="CHEBI:33722"/>
        <dbReference type="ChEBI" id="CHEBI:33723"/>
        <dbReference type="ChEBI" id="CHEBI:43474"/>
        <dbReference type="ChEBI" id="CHEBI:83348"/>
        <dbReference type="ChEBI" id="CHEBI:83350"/>
        <dbReference type="ChEBI" id="CHEBI:456216"/>
        <dbReference type="EC" id="1.3.7.7"/>
    </reaction>
</comment>
<comment type="cofactor">
    <cofactor evidence="1">
        <name>[4Fe-4S] cluster</name>
        <dbReference type="ChEBI" id="CHEBI:49883"/>
    </cofactor>
    <text evidence="1">Binds 1 [4Fe-4S] cluster per heterodimer. The cluster is bound at the heterodimer interface by residues from both subunits.</text>
</comment>
<comment type="pathway">
    <text>Porphyrin-containing compound metabolism; chlorophyll biosynthesis (light-independent).</text>
</comment>
<comment type="subunit">
    <text evidence="1">Protochlorophyllide reductase is composed of three subunits; ChlL, ChlN and ChlB. Forms a heterotetramer of two ChlB and two ChlN subunits (By similarity).</text>
</comment>
<comment type="subcellular location">
    <subcellularLocation>
        <location>Plastid</location>
        <location>Chloroplast</location>
    </subcellularLocation>
</comment>
<comment type="similarity">
    <text evidence="2">Belongs to the ChlB/BchB/BchZ family.</text>
</comment>
<protein>
    <recommendedName>
        <fullName>Light-independent protochlorophyllide reductase subunit B</fullName>
        <shortName>DPOR subunit B</shortName>
        <shortName>LI-POR subunit B</shortName>
        <ecNumber>1.3.7.7</ecNumber>
    </recommendedName>
</protein>
<sequence>KRLLGESGIAVNQVIPEGGYLNYLKDLPRAWFNIVPYREVGLMTAIFSEKEYGMPYISITPMGISNTANFIAQIEKLVNMWASALSEKRLNYKFYVDNQTKFV</sequence>
<name>CHLB_NEPEX</name>
<proteinExistence type="inferred from homology"/>
<geneLocation type="chloroplast"/>
<gene>
    <name type="primary">chlB</name>
</gene>
<evidence type="ECO:0000250" key="1"/>
<evidence type="ECO:0000305" key="2"/>
<keyword id="KW-0004">4Fe-4S</keyword>
<keyword id="KW-0067">ATP-binding</keyword>
<keyword id="KW-0149">Chlorophyll biosynthesis</keyword>
<keyword id="KW-0150">Chloroplast</keyword>
<keyword id="KW-0408">Iron</keyword>
<keyword id="KW-0411">Iron-sulfur</keyword>
<keyword id="KW-0479">Metal-binding</keyword>
<keyword id="KW-0547">Nucleotide-binding</keyword>
<keyword id="KW-0560">Oxidoreductase</keyword>
<keyword id="KW-0602">Photosynthesis</keyword>
<keyword id="KW-0934">Plastid</keyword>
<dbReference type="EC" id="1.3.7.7"/>
<dbReference type="EMBL" id="L25770">
    <property type="protein sequence ID" value="AAC37491.1"/>
    <property type="molecule type" value="Genomic_DNA"/>
</dbReference>
<dbReference type="SMR" id="P37850"/>
<dbReference type="UniPathway" id="UPA00670"/>
<dbReference type="GO" id="GO:0009507">
    <property type="term" value="C:chloroplast"/>
    <property type="evidence" value="ECO:0007669"/>
    <property type="project" value="UniProtKB-SubCell"/>
</dbReference>
<dbReference type="GO" id="GO:0051539">
    <property type="term" value="F:4 iron, 4 sulfur cluster binding"/>
    <property type="evidence" value="ECO:0007669"/>
    <property type="project" value="UniProtKB-KW"/>
</dbReference>
<dbReference type="GO" id="GO:0005524">
    <property type="term" value="F:ATP binding"/>
    <property type="evidence" value="ECO:0007669"/>
    <property type="project" value="UniProtKB-KW"/>
</dbReference>
<dbReference type="GO" id="GO:0046872">
    <property type="term" value="F:metal ion binding"/>
    <property type="evidence" value="ECO:0007669"/>
    <property type="project" value="UniProtKB-KW"/>
</dbReference>
<dbReference type="GO" id="GO:0016491">
    <property type="term" value="F:oxidoreductase activity"/>
    <property type="evidence" value="ECO:0007669"/>
    <property type="project" value="UniProtKB-KW"/>
</dbReference>
<dbReference type="GO" id="GO:0036068">
    <property type="term" value="P:light-independent chlorophyll biosynthetic process"/>
    <property type="evidence" value="ECO:0007669"/>
    <property type="project" value="UniProtKB-UniPathway"/>
</dbReference>
<dbReference type="GO" id="GO:0015979">
    <property type="term" value="P:photosynthesis"/>
    <property type="evidence" value="ECO:0007669"/>
    <property type="project" value="UniProtKB-KW"/>
</dbReference>
<dbReference type="Gene3D" id="3.40.50.1980">
    <property type="entry name" value="Nitrogenase molybdenum iron protein domain"/>
    <property type="match status" value="1"/>
</dbReference>
<dbReference type="InterPro" id="IPR050152">
    <property type="entry name" value="ChlB/BchB/BchZ"/>
</dbReference>
<dbReference type="InterPro" id="IPR000510">
    <property type="entry name" value="Nase/OxRdtase_comp1"/>
</dbReference>
<dbReference type="PANTHER" id="PTHR33712">
    <property type="entry name" value="LIGHT-INDEPENDENT PROTOCHLOROPHYLLIDE REDUCTASE SUBUNIT B"/>
    <property type="match status" value="1"/>
</dbReference>
<dbReference type="PANTHER" id="PTHR33712:SF7">
    <property type="entry name" value="LIGHT-INDEPENDENT PROTOCHLOROPHYLLIDE REDUCTASE SUBUNIT B"/>
    <property type="match status" value="1"/>
</dbReference>
<dbReference type="Pfam" id="PF00148">
    <property type="entry name" value="Oxidored_nitro"/>
    <property type="match status" value="1"/>
</dbReference>
<dbReference type="SUPFAM" id="SSF53807">
    <property type="entry name" value="Helical backbone' metal receptor"/>
    <property type="match status" value="1"/>
</dbReference>